<protein>
    <recommendedName>
        <fullName evidence="3">Protein odd-skipped-related 2</fullName>
    </recommendedName>
</protein>
<keyword id="KW-0217">Developmental protein</keyword>
<keyword id="KW-0238">DNA-binding</keyword>
<keyword id="KW-0479">Metal-binding</keyword>
<keyword id="KW-0539">Nucleus</keyword>
<keyword id="KW-1185">Reference proteome</keyword>
<keyword id="KW-0677">Repeat</keyword>
<keyword id="KW-0804">Transcription</keyword>
<keyword id="KW-0805">Transcription regulation</keyword>
<keyword id="KW-0862">Zinc</keyword>
<keyword id="KW-0863">Zinc-finger</keyword>
<name>ODD2_CAEEL</name>
<gene>
    <name evidence="5" type="primary">odd-2</name>
    <name evidence="5" type="ORF">C34H3.2</name>
</gene>
<feature type="chain" id="PRO_0000436773" description="Protein odd-skipped-related 2" evidence="3">
    <location>
        <begin position="1"/>
        <end position="254"/>
    </location>
</feature>
<feature type="zinc finger region" description="C2H2-type 1" evidence="1">
    <location>
        <begin position="124"/>
        <end position="146"/>
    </location>
</feature>
<feature type="zinc finger region" description="C2H2-type 2" evidence="1">
    <location>
        <begin position="152"/>
        <end position="174"/>
    </location>
</feature>
<feature type="zinc finger region" description="C2H2-type 3" evidence="1">
    <location>
        <begin position="180"/>
        <end position="202"/>
    </location>
</feature>
<accession>Q9N5X6</accession>
<dbReference type="EMBL" id="BX284606">
    <property type="protein sequence ID" value="CCD66692.1"/>
    <property type="molecule type" value="Genomic_DNA"/>
</dbReference>
<dbReference type="RefSeq" id="NP_509032.1">
    <property type="nucleotide sequence ID" value="NM_076631.5"/>
</dbReference>
<dbReference type="SMR" id="Q9N5X6"/>
<dbReference type="FunCoup" id="Q9N5X6">
    <property type="interactions" value="160"/>
</dbReference>
<dbReference type="IntAct" id="Q9N5X6">
    <property type="interactions" value="12"/>
</dbReference>
<dbReference type="STRING" id="6239.C34H3.2.1"/>
<dbReference type="PaxDb" id="6239-C34H3.2"/>
<dbReference type="EnsemblMetazoa" id="C34H3.2.1">
    <property type="protein sequence ID" value="C34H3.2.1"/>
    <property type="gene ID" value="WBGene00003846"/>
</dbReference>
<dbReference type="GeneID" id="183219"/>
<dbReference type="KEGG" id="cel:CELE_C34H3.2"/>
<dbReference type="UCSC" id="C34H3.2">
    <property type="organism name" value="c. elegans"/>
</dbReference>
<dbReference type="AGR" id="WB:WBGene00003846"/>
<dbReference type="CTD" id="183219"/>
<dbReference type="WormBase" id="C34H3.2">
    <property type="protein sequence ID" value="CE23571"/>
    <property type="gene ID" value="WBGene00003846"/>
    <property type="gene designation" value="odd-2"/>
</dbReference>
<dbReference type="eggNOG" id="KOG1721">
    <property type="taxonomic scope" value="Eukaryota"/>
</dbReference>
<dbReference type="HOGENOM" id="CLU_1095124_0_0_1"/>
<dbReference type="InParanoid" id="Q9N5X6"/>
<dbReference type="OMA" id="FTHMADS"/>
<dbReference type="OrthoDB" id="9451254at2759"/>
<dbReference type="PhylomeDB" id="Q9N5X6"/>
<dbReference type="PRO" id="PR:Q9N5X6"/>
<dbReference type="Proteomes" id="UP000001940">
    <property type="component" value="Chromosome X"/>
</dbReference>
<dbReference type="Bgee" id="WBGene00003846">
    <property type="expression patterns" value="Expressed in larva and 3 other cell types or tissues"/>
</dbReference>
<dbReference type="GO" id="GO:0005634">
    <property type="term" value="C:nucleus"/>
    <property type="evidence" value="ECO:0007669"/>
    <property type="project" value="UniProtKB-SubCell"/>
</dbReference>
<dbReference type="GO" id="GO:0003677">
    <property type="term" value="F:DNA binding"/>
    <property type="evidence" value="ECO:0007669"/>
    <property type="project" value="UniProtKB-KW"/>
</dbReference>
<dbReference type="GO" id="GO:0008270">
    <property type="term" value="F:zinc ion binding"/>
    <property type="evidence" value="ECO:0007669"/>
    <property type="project" value="UniProtKB-KW"/>
</dbReference>
<dbReference type="FunFam" id="3.30.160.60:FF:000958">
    <property type="entry name" value="Odd skipped"/>
    <property type="match status" value="1"/>
</dbReference>
<dbReference type="FunFam" id="3.30.160.60:FF:000254">
    <property type="entry name" value="Odd-skipped related transciption factor 1"/>
    <property type="match status" value="1"/>
</dbReference>
<dbReference type="FunFam" id="3.30.160.60:FF:000311">
    <property type="entry name" value="protein odd-skipped-related 2 isoform X1"/>
    <property type="match status" value="1"/>
</dbReference>
<dbReference type="Gene3D" id="3.30.160.60">
    <property type="entry name" value="Classic Zinc Finger"/>
    <property type="match status" value="3"/>
</dbReference>
<dbReference type="InterPro" id="IPR050717">
    <property type="entry name" value="C2H2-ZF_Transcription_Reg"/>
</dbReference>
<dbReference type="InterPro" id="IPR036236">
    <property type="entry name" value="Znf_C2H2_sf"/>
</dbReference>
<dbReference type="InterPro" id="IPR013087">
    <property type="entry name" value="Znf_C2H2_type"/>
</dbReference>
<dbReference type="PANTHER" id="PTHR14196">
    <property type="entry name" value="ODD-SKIPPED - RELATED"/>
    <property type="match status" value="1"/>
</dbReference>
<dbReference type="PANTHER" id="PTHR14196:SF0">
    <property type="entry name" value="PROTEIN BOWEL"/>
    <property type="match status" value="1"/>
</dbReference>
<dbReference type="Pfam" id="PF00096">
    <property type="entry name" value="zf-C2H2"/>
    <property type="match status" value="3"/>
</dbReference>
<dbReference type="SMART" id="SM00355">
    <property type="entry name" value="ZnF_C2H2"/>
    <property type="match status" value="3"/>
</dbReference>
<dbReference type="SUPFAM" id="SSF57667">
    <property type="entry name" value="beta-beta-alpha zinc fingers"/>
    <property type="match status" value="2"/>
</dbReference>
<dbReference type="PROSITE" id="PS00028">
    <property type="entry name" value="ZINC_FINGER_C2H2_1"/>
    <property type="match status" value="3"/>
</dbReference>
<dbReference type="PROSITE" id="PS50157">
    <property type="entry name" value="ZINC_FINGER_C2H2_2"/>
    <property type="match status" value="3"/>
</dbReference>
<comment type="function">
    <text evidence="2 3">May function as transcription regulator (Probable). Required for morphogenesis and function of the digestive tract.</text>
</comment>
<comment type="subcellular location">
    <subcellularLocation>
        <location evidence="3">Nucleus</location>
    </subcellularLocation>
</comment>
<comment type="developmental stage">
    <text evidence="2">Expressed in the intestine from embryogenesis to adulthood. Highly expressed in the most anterior and posterior parts of the intestine in hatched larva. Also expressed in cells outside of the intestine near the anus in hatched larva.</text>
</comment>
<comment type="disruption phenotype">
    <text evidence="2">RNAi-mediated knockdown results in defects in feeding, and failed growth and development eventually leading to lethality at the late L1 to L2 stage of larval development. Morphological defects in the digestive tract, such as enlarged pharyngeal intestinal valve lumen, leading to functional defects including accumulation of ingested bacteria in the lumen of the posterior intestine and defective elimination from the anterior lumen of the intestine.</text>
</comment>
<comment type="similarity">
    <text evidence="3">Belongs to the Odd C2H2-type zinc-finger protein family.</text>
</comment>
<evidence type="ECO:0000255" key="1">
    <source>
        <dbReference type="PROSITE-ProRule" id="PRU00042"/>
    </source>
</evidence>
<evidence type="ECO:0000269" key="2">
    <source>
    </source>
</evidence>
<evidence type="ECO:0000305" key="3"/>
<evidence type="ECO:0000312" key="4">
    <source>
        <dbReference type="Proteomes" id="UP000001940"/>
    </source>
</evidence>
<evidence type="ECO:0000312" key="5">
    <source>
        <dbReference type="WormBase" id="C34H3.2"/>
    </source>
</evidence>
<proteinExistence type="evidence at transcript level"/>
<sequence>MLPWQRQVPTSIFPQSNEQVFRMMLAQQHLQLQNFLQQRKMALLAMNPEIPMITDLKKAKFDFTHMADSIESEQKIKEESVSPKMSPTLTTAAVRPFVPYDQPWFMIPGRGRTTGRAARPKKEFICKYCDRHFTKSYNLLIHERTHTDERPYSCDVCGKAFRRQDHLRDHKYIHQKDRPFKCEICGKGFCQSRTLLVHRATHDPNRHSIGAPVVPIKSETPLPELDPRVTLILQNLTDSFNSTSMTSPQISPDR</sequence>
<organism evidence="4">
    <name type="scientific">Caenorhabditis elegans</name>
    <dbReference type="NCBI Taxonomy" id="6239"/>
    <lineage>
        <taxon>Eukaryota</taxon>
        <taxon>Metazoa</taxon>
        <taxon>Ecdysozoa</taxon>
        <taxon>Nematoda</taxon>
        <taxon>Chromadorea</taxon>
        <taxon>Rhabditida</taxon>
        <taxon>Rhabditina</taxon>
        <taxon>Rhabditomorpha</taxon>
        <taxon>Rhabditoidea</taxon>
        <taxon>Rhabditidae</taxon>
        <taxon>Peloderinae</taxon>
        <taxon>Caenorhabditis</taxon>
    </lineage>
</organism>
<reference evidence="4" key="1">
    <citation type="journal article" date="1998" name="Science">
        <title>Genome sequence of the nematode C. elegans: a platform for investigating biology.</title>
        <authorList>
            <consortium name="The C. elegans sequencing consortium"/>
        </authorList>
    </citation>
    <scope>NUCLEOTIDE SEQUENCE [LARGE SCALE GENOMIC DNA]</scope>
    <source>
        <strain evidence="4">Bristol N2</strain>
    </source>
</reference>
<reference evidence="3" key="2">
    <citation type="journal article" date="2004" name="Dev. Genes Evol.">
        <title>Odd-skipped homologs function during gut development in C. elegans.</title>
        <authorList>
            <person name="Buckley M.S."/>
            <person name="Chau J."/>
            <person name="Hoppe P.E."/>
            <person name="Coulter D.E."/>
        </authorList>
    </citation>
    <scope>FUNCTION</scope>
    <scope>DEVELOPMENTAL STAGE</scope>
    <scope>DISRUPTION PHENOTYPE</scope>
</reference>